<sequence length="107" mass="11781">MAEAAHGGGLRGRGVLLGGVQDAPAGRENDLETIELARFAVAEHNAKANALLEFEKLVKVRQQVVAGCMHYFTIEVKEGGAKKLYEAKVWEKAWENFKQLQEFKPAA</sequence>
<organism>
    <name type="scientific">Hordeum vulgare</name>
    <name type="common">Barley</name>
    <dbReference type="NCBI Taxonomy" id="4513"/>
    <lineage>
        <taxon>Eukaryota</taxon>
        <taxon>Viridiplantae</taxon>
        <taxon>Streptophyta</taxon>
        <taxon>Embryophyta</taxon>
        <taxon>Tracheophyta</taxon>
        <taxon>Spermatophyta</taxon>
        <taxon>Magnoliopsida</taxon>
        <taxon>Liliopsida</taxon>
        <taxon>Poales</taxon>
        <taxon>Poaceae</taxon>
        <taxon>BOP clade</taxon>
        <taxon>Pooideae</taxon>
        <taxon>Triticodae</taxon>
        <taxon>Triticeae</taxon>
        <taxon>Hordeinae</taxon>
        <taxon>Hordeum</taxon>
    </lineage>
</organism>
<protein>
    <recommendedName>
        <fullName>Cysteine proteinase inhibitor</fullName>
    </recommendedName>
    <alternativeName>
        <fullName>Cystatin</fullName>
    </alternativeName>
    <alternativeName>
        <fullName>Hv-CPI</fullName>
    </alternativeName>
</protein>
<keyword id="KW-0611">Plant defense</keyword>
<keyword id="KW-0646">Protease inhibitor</keyword>
<keyword id="KW-0789">Thiol protease inhibitor</keyword>
<accession>Q9LEI7</accession>
<accession>Q4W4C8</accession>
<gene>
    <name type="primary">ICY</name>
    <name type="synonym">CPI</name>
</gene>
<name>CYT1_HORVU</name>
<evidence type="ECO:0000250" key="1"/>
<evidence type="ECO:0000269" key="2">
    <source>
    </source>
</evidence>
<evidence type="ECO:0000269" key="3">
    <source>
    </source>
</evidence>
<evidence type="ECO:0000269" key="4">
    <source>
    </source>
</evidence>
<evidence type="ECO:0000269" key="5">
    <source>
    </source>
</evidence>
<evidence type="ECO:0000305" key="6"/>
<feature type="chain" id="PRO_0000312803" description="Cysteine proteinase inhibitor">
    <location>
        <begin position="1"/>
        <end position="107"/>
    </location>
</feature>
<feature type="domain" description="Cystatin">
    <location>
        <begin position="18"/>
        <end position="107"/>
    </location>
</feature>
<feature type="short sequence motif" description="Secondary area of contact" evidence="1">
    <location>
        <begin position="63"/>
        <end position="67"/>
    </location>
</feature>
<feature type="site" description="Reactive site" evidence="1">
    <location>
        <position position="18"/>
    </location>
</feature>
<feature type="mutagenesis site" description="Decreased cystatin activity, but no effect on anti-fungal activity." evidence="4">
    <original>R</original>
    <variation>G</variation>
    <location>
        <position position="38"/>
    </location>
</feature>
<feature type="mutagenesis site" description="Decreased cystatin activity, but no effect on anti-fungal activity." evidence="4">
    <original>Q</original>
    <variation>L</variation>
    <variation>P</variation>
    <location>
        <position position="63"/>
    </location>
</feature>
<feature type="mutagenesis site" description="Increased cystatin activity." evidence="4">
    <original>C</original>
    <variation>G</variation>
    <location>
        <position position="68"/>
    </location>
</feature>
<feature type="mutagenesis site" description="Loss of anti-fungal activity, but retains some cystatin activity." evidence="4">
    <original>K</original>
    <variation>P</variation>
    <location>
        <position position="92"/>
    </location>
</feature>
<feature type="sequence conflict" description="In Ref. 2; CAD60537." evidence="6" ref="2">
    <original>H</original>
    <variation>Q</variation>
    <location>
        <position position="6"/>
    </location>
</feature>
<feature type="sequence conflict" description="In Ref. 2; CAD60537." evidence="6" ref="2">
    <original>K</original>
    <variation>R</variation>
    <location>
        <position position="56"/>
    </location>
</feature>
<reference key="1">
    <citation type="journal article" date="2001" name="Plant Mol. Biol.">
        <title>A constitutive cystatin-encoding gene from barley (Icy) responds differentially to abiotic stimuli.</title>
        <authorList>
            <person name="Gaddour K."/>
            <person name="Vicente-Carbajosa J."/>
            <person name="Lara P."/>
            <person name="Isabel-Lamoneda I."/>
            <person name="Diaz I."/>
            <person name="Carbonero P."/>
        </authorList>
    </citation>
    <scope>NUCLEOTIDE SEQUENCE [MRNA]</scope>
    <scope>FUNCTION</scope>
    <scope>INDUCTION</scope>
    <scope>TISSUE SPECIFICITY</scope>
    <source>
        <strain>cv. Bomi</strain>
        <tissue>Endosperm</tissue>
    </source>
</reference>
<reference key="2">
    <citation type="journal article" date="2005" name="J. Exp. Bot.">
        <title>The barley cystatin gene (Icy) is regulated by DOF transcription factors in aleurone cells upon germination.</title>
        <authorList>
            <person name="Martinez M."/>
            <person name="Rubio-Somoza I."/>
            <person name="Fuentes R."/>
            <person name="Lara P."/>
            <person name="Carbonero P."/>
            <person name="Diaz I."/>
        </authorList>
    </citation>
    <scope>NUCLEOTIDE SEQUENCE [GENOMIC DNA]</scope>
    <scope>INDUCTION BY GIBBERELLIC ACID</scope>
    <scope>TISSUE SPECIFICITY</scope>
    <scope>DEVELOPMENTAL STAGE</scope>
    <source>
        <strain>cv. Igri</strain>
    </source>
</reference>
<reference key="3">
    <citation type="journal article" date="2003" name="Mol. Plant Microbe Interact.">
        <title>Inhibition of plant-pathogenic fungi by the barley cystatin Hv-CPI (gene Icy) is not associated with its cysteine-proteinase inhibitory properties.</title>
        <authorList>
            <person name="Martinez M."/>
            <person name="Lopez-Solanilla E."/>
            <person name="Rodriguez-Palenzuela P."/>
            <person name="Carbonero P."/>
            <person name="Diaz I."/>
        </authorList>
    </citation>
    <scope>MUTAGENESIS OF ARG-38; GLN-63; CYS-68 AND LYS-92</scope>
    <scope>FUNCTION</scope>
</reference>
<reference key="4">
    <citation type="journal article" date="2003" name="J. Exp. Bot.">
        <title>A cathepsin B-like cysteine protease gene from Hordeum vulgare (gene CatB) induced by GA in aleurone cells is under circadian control in leaves.</title>
        <authorList>
            <person name="Martinez M."/>
            <person name="Rubio-Somoza I."/>
            <person name="Carbonero P."/>
            <person name="Diaz I."/>
        </authorList>
    </citation>
    <scope>INDUCTION BY GIBBERELLIC ACID; ABSCISIC ACID; GERMINATION</scope>
</reference>
<comment type="function">
    <text evidence="2 4">Inhibits papain, ficin, cathepsin B and, to a lesser extent, chymopapain, but is inactive against bromelain. Inhibits the growth of pathogenic fungi. Regulated by the DOF transcription factors SAD (activator) and BPBF (repressor).</text>
</comment>
<comment type="tissue specificity">
    <text evidence="2 5">Expressed in embryos, developing endosperms, leaves, roots, flowers and pollen grains.</text>
</comment>
<comment type="developmental stage">
    <text evidence="5">Expressed during seed germination.</text>
</comment>
<comment type="induction">
    <text evidence="2 3 5">Up-regulated by dark and cold shock, anaerobiosis and upon seed imbibition. Repressed by gibberellic acid treatment in aleurones, but not in leaves. Not affected by abscisic acid treatment.</text>
</comment>
<comment type="similarity">
    <text evidence="6">Belongs to the cystatin family. Phytocystatin subfamily.</text>
</comment>
<proteinExistence type="evidence at protein level"/>
<dbReference type="EMBL" id="Y12068">
    <property type="protein sequence ID" value="CAA72790.1"/>
    <property type="molecule type" value="mRNA"/>
</dbReference>
<dbReference type="EMBL" id="AJ536590">
    <property type="protein sequence ID" value="CAD60537.1"/>
    <property type="molecule type" value="Genomic_DNA"/>
</dbReference>
<dbReference type="SMR" id="Q9LEI7"/>
<dbReference type="MEROPS" id="I25.051"/>
<dbReference type="ExpressionAtlas" id="Q9LEI7">
    <property type="expression patterns" value="baseline and differential"/>
</dbReference>
<dbReference type="GO" id="GO:0004869">
    <property type="term" value="F:cysteine-type endopeptidase inhibitor activity"/>
    <property type="evidence" value="ECO:0007669"/>
    <property type="project" value="UniProtKB-KW"/>
</dbReference>
<dbReference type="GO" id="GO:0006952">
    <property type="term" value="P:defense response"/>
    <property type="evidence" value="ECO:0007669"/>
    <property type="project" value="UniProtKB-KW"/>
</dbReference>
<dbReference type="CDD" id="cd00042">
    <property type="entry name" value="CY"/>
    <property type="match status" value="1"/>
</dbReference>
<dbReference type="Gene3D" id="3.10.450.10">
    <property type="match status" value="1"/>
</dbReference>
<dbReference type="InterPro" id="IPR027214">
    <property type="entry name" value="Cystatin"/>
</dbReference>
<dbReference type="InterPro" id="IPR000010">
    <property type="entry name" value="Cystatin_dom"/>
</dbReference>
<dbReference type="InterPro" id="IPR046350">
    <property type="entry name" value="Cystatin_sf"/>
</dbReference>
<dbReference type="InterPro" id="IPR018073">
    <property type="entry name" value="Prot_inh_cystat_CS"/>
</dbReference>
<dbReference type="PANTHER" id="PTHR11413">
    <property type="entry name" value="CYSTATIN FAMILY MEMBER"/>
    <property type="match status" value="1"/>
</dbReference>
<dbReference type="PANTHER" id="PTHR11413:SF104">
    <property type="entry name" value="CYSTEINE PROTEINASE INHIBITOR 2"/>
    <property type="match status" value="1"/>
</dbReference>
<dbReference type="Pfam" id="PF16845">
    <property type="entry name" value="SQAPI"/>
    <property type="match status" value="1"/>
</dbReference>
<dbReference type="SMART" id="SM00043">
    <property type="entry name" value="CY"/>
    <property type="match status" value="1"/>
</dbReference>
<dbReference type="SUPFAM" id="SSF54403">
    <property type="entry name" value="Cystatin/monellin"/>
    <property type="match status" value="1"/>
</dbReference>
<dbReference type="PROSITE" id="PS00287">
    <property type="entry name" value="CYSTATIN"/>
    <property type="match status" value="1"/>
</dbReference>